<keyword id="KW-0119">Carbohydrate metabolism</keyword>
<keyword id="KW-0413">Isomerase</keyword>
<protein>
    <recommendedName>
        <fullName evidence="1">Putative N-acetylmannosamine-6-phosphate 2-epimerase</fullName>
        <ecNumber evidence="1">5.1.3.9</ecNumber>
    </recommendedName>
    <alternativeName>
        <fullName evidence="1">ManNAc-6-P epimerase</fullName>
    </alternativeName>
</protein>
<dbReference type="EC" id="5.1.3.9" evidence="1"/>
<dbReference type="EMBL" id="CP001205">
    <property type="protein sequence ID" value="ACK74739.1"/>
    <property type="molecule type" value="Genomic_DNA"/>
</dbReference>
<dbReference type="RefSeq" id="WP_002557231.1">
    <property type="nucleotide sequence ID" value="NC_011728.1"/>
</dbReference>
<dbReference type="SMR" id="B7J2K0"/>
<dbReference type="KEGG" id="bbz:BbuZS7_0664"/>
<dbReference type="HOGENOM" id="CLU_086300_1_0_12"/>
<dbReference type="UniPathway" id="UPA00629">
    <property type="reaction ID" value="UER00682"/>
</dbReference>
<dbReference type="Proteomes" id="UP000006901">
    <property type="component" value="Chromosome"/>
</dbReference>
<dbReference type="GO" id="GO:0005829">
    <property type="term" value="C:cytosol"/>
    <property type="evidence" value="ECO:0007669"/>
    <property type="project" value="TreeGrafter"/>
</dbReference>
<dbReference type="GO" id="GO:0047465">
    <property type="term" value="F:N-acylglucosamine-6-phosphate 2-epimerase activity"/>
    <property type="evidence" value="ECO:0007669"/>
    <property type="project" value="UniProtKB-EC"/>
</dbReference>
<dbReference type="GO" id="GO:0005975">
    <property type="term" value="P:carbohydrate metabolic process"/>
    <property type="evidence" value="ECO:0007669"/>
    <property type="project" value="UniProtKB-UniRule"/>
</dbReference>
<dbReference type="GO" id="GO:0006053">
    <property type="term" value="P:N-acetylmannosamine catabolic process"/>
    <property type="evidence" value="ECO:0007669"/>
    <property type="project" value="TreeGrafter"/>
</dbReference>
<dbReference type="GO" id="GO:0019262">
    <property type="term" value="P:N-acetylneuraminate catabolic process"/>
    <property type="evidence" value="ECO:0007669"/>
    <property type="project" value="UniProtKB-UniRule"/>
</dbReference>
<dbReference type="CDD" id="cd04729">
    <property type="entry name" value="NanE"/>
    <property type="match status" value="1"/>
</dbReference>
<dbReference type="FunFam" id="3.20.20.70:FF:000035">
    <property type="entry name" value="Putative N-acetylmannosamine-6-phosphate 2-epimerase"/>
    <property type="match status" value="1"/>
</dbReference>
<dbReference type="Gene3D" id="3.20.20.70">
    <property type="entry name" value="Aldolase class I"/>
    <property type="match status" value="1"/>
</dbReference>
<dbReference type="HAMAP" id="MF_01235">
    <property type="entry name" value="ManNAc6P_epimer"/>
    <property type="match status" value="1"/>
</dbReference>
<dbReference type="InterPro" id="IPR013785">
    <property type="entry name" value="Aldolase_TIM"/>
</dbReference>
<dbReference type="InterPro" id="IPR007260">
    <property type="entry name" value="NanE"/>
</dbReference>
<dbReference type="InterPro" id="IPR011060">
    <property type="entry name" value="RibuloseP-bd_barrel"/>
</dbReference>
<dbReference type="NCBIfam" id="NF002231">
    <property type="entry name" value="PRK01130.1"/>
    <property type="match status" value="1"/>
</dbReference>
<dbReference type="PANTHER" id="PTHR36204">
    <property type="entry name" value="N-ACETYLMANNOSAMINE-6-PHOSPHATE 2-EPIMERASE-RELATED"/>
    <property type="match status" value="1"/>
</dbReference>
<dbReference type="PANTHER" id="PTHR36204:SF1">
    <property type="entry name" value="N-ACETYLMANNOSAMINE-6-PHOSPHATE 2-EPIMERASE-RELATED"/>
    <property type="match status" value="1"/>
</dbReference>
<dbReference type="Pfam" id="PF04131">
    <property type="entry name" value="NanE"/>
    <property type="match status" value="1"/>
</dbReference>
<dbReference type="SUPFAM" id="SSF51366">
    <property type="entry name" value="Ribulose-phoshate binding barrel"/>
    <property type="match status" value="1"/>
</dbReference>
<reference key="1">
    <citation type="journal article" date="2011" name="J. Bacteriol.">
        <title>Whole-genome sequences of thirteen isolates of Borrelia burgdorferi.</title>
        <authorList>
            <person name="Schutzer S.E."/>
            <person name="Fraser-Liggett C.M."/>
            <person name="Casjens S.R."/>
            <person name="Qiu W.G."/>
            <person name="Dunn J.J."/>
            <person name="Mongodin E.F."/>
            <person name="Luft B.J."/>
        </authorList>
    </citation>
    <scope>NUCLEOTIDE SEQUENCE [LARGE SCALE GENOMIC DNA]</scope>
    <source>
        <strain>ZS7</strain>
    </source>
</reference>
<name>NANE_BORBZ</name>
<sequence>MIIIVKIKRGLIVSCQALENEPLHSSFIMSKMALAAKIGGAIGIRANGVNDISQIKLEVDLPIIGIIKKNYNNCDVFITPTMKEIDELCNEGVDIIALDATFRNRPDGVLLDDFFENIKKKYPKQCLMADISSLDEAINADKLGFDFIGTTLYGYTKNTNGLNIADNDFNFLRTLLNSNLKSTLIVEGKIDTPLKAQKCFEMGVDLVVVGGAITRPAEITKKFVEKINQIKK</sequence>
<proteinExistence type="inferred from homology"/>
<comment type="function">
    <text evidence="1">Converts N-acetylmannosamine-6-phosphate (ManNAc-6-P) to N-acetylglucosamine-6-phosphate (GlcNAc-6-P).</text>
</comment>
<comment type="catalytic activity">
    <reaction evidence="1">
        <text>an N-acyl-D-glucosamine 6-phosphate = an N-acyl-D-mannosamine 6-phosphate</text>
        <dbReference type="Rhea" id="RHEA:23932"/>
        <dbReference type="ChEBI" id="CHEBI:57599"/>
        <dbReference type="ChEBI" id="CHEBI:57666"/>
        <dbReference type="EC" id="5.1.3.9"/>
    </reaction>
</comment>
<comment type="pathway">
    <text evidence="1">Amino-sugar metabolism; N-acetylneuraminate degradation; D-fructose 6-phosphate from N-acetylneuraminate: step 3/5.</text>
</comment>
<comment type="similarity">
    <text evidence="1">Belongs to the NanE family.</text>
</comment>
<accession>B7J2K0</accession>
<feature type="chain" id="PRO_1000139702" description="Putative N-acetylmannosamine-6-phosphate 2-epimerase">
    <location>
        <begin position="1"/>
        <end position="232"/>
    </location>
</feature>
<evidence type="ECO:0000255" key="1">
    <source>
        <dbReference type="HAMAP-Rule" id="MF_01235"/>
    </source>
</evidence>
<gene>
    <name evidence="1" type="primary">nanE</name>
    <name type="ordered locus">BbuZS7_0664</name>
</gene>
<organism>
    <name type="scientific">Borreliella burgdorferi (strain ZS7)</name>
    <name type="common">Borrelia burgdorferi</name>
    <dbReference type="NCBI Taxonomy" id="445985"/>
    <lineage>
        <taxon>Bacteria</taxon>
        <taxon>Pseudomonadati</taxon>
        <taxon>Spirochaetota</taxon>
        <taxon>Spirochaetia</taxon>
        <taxon>Spirochaetales</taxon>
        <taxon>Borreliaceae</taxon>
        <taxon>Borreliella</taxon>
    </lineage>
</organism>